<name>RSMG_SALAR</name>
<accession>A9MJR0</accession>
<comment type="function">
    <text evidence="1">Specifically methylates the N7 position of guanine in position 527 of 16S rRNA.</text>
</comment>
<comment type="catalytic activity">
    <reaction evidence="1">
        <text>guanosine(527) in 16S rRNA + S-adenosyl-L-methionine = N(7)-methylguanosine(527) in 16S rRNA + S-adenosyl-L-homocysteine</text>
        <dbReference type="Rhea" id="RHEA:42732"/>
        <dbReference type="Rhea" id="RHEA-COMP:10209"/>
        <dbReference type="Rhea" id="RHEA-COMP:10210"/>
        <dbReference type="ChEBI" id="CHEBI:57856"/>
        <dbReference type="ChEBI" id="CHEBI:59789"/>
        <dbReference type="ChEBI" id="CHEBI:74269"/>
        <dbReference type="ChEBI" id="CHEBI:74480"/>
        <dbReference type="EC" id="2.1.1.170"/>
    </reaction>
</comment>
<comment type="subcellular location">
    <subcellularLocation>
        <location evidence="1">Cytoplasm</location>
    </subcellularLocation>
</comment>
<comment type="similarity">
    <text evidence="1">Belongs to the methyltransferase superfamily. RNA methyltransferase RsmG family.</text>
</comment>
<organism>
    <name type="scientific">Salmonella arizonae (strain ATCC BAA-731 / CDC346-86 / RSK2980)</name>
    <dbReference type="NCBI Taxonomy" id="41514"/>
    <lineage>
        <taxon>Bacteria</taxon>
        <taxon>Pseudomonadati</taxon>
        <taxon>Pseudomonadota</taxon>
        <taxon>Gammaproteobacteria</taxon>
        <taxon>Enterobacterales</taxon>
        <taxon>Enterobacteriaceae</taxon>
        <taxon>Salmonella</taxon>
    </lineage>
</organism>
<reference key="1">
    <citation type="submission" date="2007-11" db="EMBL/GenBank/DDBJ databases">
        <authorList>
            <consortium name="The Salmonella enterica serovar Arizonae Genome Sequencing Project"/>
            <person name="McClelland M."/>
            <person name="Sanderson E.K."/>
            <person name="Porwollik S."/>
            <person name="Spieth J."/>
            <person name="Clifton W.S."/>
            <person name="Fulton R."/>
            <person name="Chunyan W."/>
            <person name="Wollam A."/>
            <person name="Shah N."/>
            <person name="Pepin K."/>
            <person name="Bhonagiri V."/>
            <person name="Nash W."/>
            <person name="Johnson M."/>
            <person name="Thiruvilangam P."/>
            <person name="Wilson R."/>
        </authorList>
    </citation>
    <scope>NUCLEOTIDE SEQUENCE [LARGE SCALE GENOMIC DNA]</scope>
    <source>
        <strain>ATCC BAA-731 / CDC346-86 / RSK2980</strain>
    </source>
</reference>
<keyword id="KW-0963">Cytoplasm</keyword>
<keyword id="KW-0489">Methyltransferase</keyword>
<keyword id="KW-1185">Reference proteome</keyword>
<keyword id="KW-0698">rRNA processing</keyword>
<keyword id="KW-0949">S-adenosyl-L-methionine</keyword>
<keyword id="KW-0808">Transferase</keyword>
<proteinExistence type="inferred from homology"/>
<feature type="chain" id="PRO_1000075229" description="Ribosomal RNA small subunit methyltransferase G">
    <location>
        <begin position="1"/>
        <end position="207"/>
    </location>
</feature>
<feature type="binding site" evidence="1">
    <location>
        <position position="73"/>
    </location>
    <ligand>
        <name>S-adenosyl-L-methionine</name>
        <dbReference type="ChEBI" id="CHEBI:59789"/>
    </ligand>
</feature>
<feature type="binding site" evidence="1">
    <location>
        <position position="78"/>
    </location>
    <ligand>
        <name>S-adenosyl-L-methionine</name>
        <dbReference type="ChEBI" id="CHEBI:59789"/>
    </ligand>
</feature>
<feature type="binding site" evidence="1">
    <location>
        <begin position="124"/>
        <end position="125"/>
    </location>
    <ligand>
        <name>S-adenosyl-L-methionine</name>
        <dbReference type="ChEBI" id="CHEBI:59789"/>
    </ligand>
</feature>
<feature type="binding site" evidence="1">
    <location>
        <position position="139"/>
    </location>
    <ligand>
        <name>S-adenosyl-L-methionine</name>
        <dbReference type="ChEBI" id="CHEBI:59789"/>
    </ligand>
</feature>
<protein>
    <recommendedName>
        <fullName evidence="1">Ribosomal RNA small subunit methyltransferase G</fullName>
        <ecNumber evidence="1">2.1.1.170</ecNumber>
    </recommendedName>
    <alternativeName>
        <fullName evidence="1">16S rRNA 7-methylguanosine methyltransferase</fullName>
        <shortName evidence="1">16S rRNA m7G methyltransferase</shortName>
    </alternativeName>
</protein>
<gene>
    <name evidence="1" type="primary">rsmG</name>
    <name type="ordered locus">SARI_03777</name>
</gene>
<dbReference type="EC" id="2.1.1.170" evidence="1"/>
<dbReference type="EMBL" id="CP000880">
    <property type="protein sequence ID" value="ABX23571.1"/>
    <property type="molecule type" value="Genomic_DNA"/>
</dbReference>
<dbReference type="SMR" id="A9MJR0"/>
<dbReference type="STRING" id="41514.SARI_03777"/>
<dbReference type="KEGG" id="ses:SARI_03777"/>
<dbReference type="HOGENOM" id="CLU_065341_2_2_6"/>
<dbReference type="Proteomes" id="UP000002084">
    <property type="component" value="Chromosome"/>
</dbReference>
<dbReference type="GO" id="GO:0005829">
    <property type="term" value="C:cytosol"/>
    <property type="evidence" value="ECO:0007669"/>
    <property type="project" value="TreeGrafter"/>
</dbReference>
<dbReference type="GO" id="GO:0070043">
    <property type="term" value="F:rRNA (guanine-N7-)-methyltransferase activity"/>
    <property type="evidence" value="ECO:0007669"/>
    <property type="project" value="UniProtKB-UniRule"/>
</dbReference>
<dbReference type="CDD" id="cd02440">
    <property type="entry name" value="AdoMet_MTases"/>
    <property type="match status" value="1"/>
</dbReference>
<dbReference type="FunFam" id="3.40.50.150:FF:000032">
    <property type="entry name" value="Ribosomal RNA small subunit methyltransferase G"/>
    <property type="match status" value="1"/>
</dbReference>
<dbReference type="Gene3D" id="3.40.50.150">
    <property type="entry name" value="Vaccinia Virus protein VP39"/>
    <property type="match status" value="1"/>
</dbReference>
<dbReference type="HAMAP" id="MF_00074">
    <property type="entry name" value="16SrRNA_methyltr_G"/>
    <property type="match status" value="1"/>
</dbReference>
<dbReference type="InterPro" id="IPR003682">
    <property type="entry name" value="rRNA_ssu_MeTfrase_G"/>
</dbReference>
<dbReference type="InterPro" id="IPR029063">
    <property type="entry name" value="SAM-dependent_MTases_sf"/>
</dbReference>
<dbReference type="NCBIfam" id="TIGR00138">
    <property type="entry name" value="rsmG_gidB"/>
    <property type="match status" value="1"/>
</dbReference>
<dbReference type="PANTHER" id="PTHR31760">
    <property type="entry name" value="S-ADENOSYL-L-METHIONINE-DEPENDENT METHYLTRANSFERASES SUPERFAMILY PROTEIN"/>
    <property type="match status" value="1"/>
</dbReference>
<dbReference type="PANTHER" id="PTHR31760:SF0">
    <property type="entry name" value="S-ADENOSYL-L-METHIONINE-DEPENDENT METHYLTRANSFERASES SUPERFAMILY PROTEIN"/>
    <property type="match status" value="1"/>
</dbReference>
<dbReference type="Pfam" id="PF02527">
    <property type="entry name" value="GidB"/>
    <property type="match status" value="1"/>
</dbReference>
<dbReference type="PIRSF" id="PIRSF003078">
    <property type="entry name" value="GidB"/>
    <property type="match status" value="1"/>
</dbReference>
<dbReference type="SUPFAM" id="SSF53335">
    <property type="entry name" value="S-adenosyl-L-methionine-dependent methyltransferases"/>
    <property type="match status" value="1"/>
</dbReference>
<sequence length="207" mass="23196">MLNKLSRLLDEAGISLTDHQKNHLVAYVGMLDKWNKAYNLTSVRDPAEMIVRHILDSIVVAPYLQGQRFIDVGTGPGLPGIPLAIVLPDAHFTLLDSLGKRVRFLRQVQHELKLENITPVQSRVEAYPSEPPFDGVISRAFASLSDMVSWCRHLPGDKGRFYALKGQLPEDEIASLPNNFSVESVEKLRVPQLEGERHLVIIKSNKV</sequence>
<evidence type="ECO:0000255" key="1">
    <source>
        <dbReference type="HAMAP-Rule" id="MF_00074"/>
    </source>
</evidence>